<name>KA11M_OLIMR</name>
<sequence>MNKVYLVAVLVLFLALTINESNEAVPTGGCPFSDFFCAKRCKDMKFGNTGRCTGPNKTVCKCSI</sequence>
<proteinExistence type="inferred from homology"/>
<feature type="signal peptide" evidence="1">
    <location>
        <begin position="1"/>
        <end position="21"/>
    </location>
</feature>
<feature type="chain" id="PRO_0000403913" description="Potassium channel toxin alpha-KTx J123">
    <location>
        <begin position="22"/>
        <end position="64"/>
    </location>
</feature>
<feature type="disulfide bond" evidence="2">
    <location>
        <begin position="30"/>
        <end position="52"/>
    </location>
</feature>
<feature type="disulfide bond" evidence="2">
    <location>
        <begin position="37"/>
        <end position="60"/>
    </location>
</feature>
<feature type="disulfide bond" evidence="2">
    <location>
        <begin position="41"/>
        <end position="62"/>
    </location>
</feature>
<comment type="function">
    <text evidence="3">This recombinant toxin inhibits mammalian voltage-gated potassium channels Kv1.3/KCNA3 (IC(50)=0.79 nM) and Kv1.2/KCNA2 (IC(50)=26.4 nM).</text>
</comment>
<comment type="subcellular location">
    <subcellularLocation>
        <location evidence="6">Secreted</location>
    </subcellularLocation>
</comment>
<comment type="tissue specificity">
    <text evidence="6">Expressed by the venom gland.</text>
</comment>
<comment type="domain">
    <text evidence="5">Has the structural arrangement of an alpha-helix connected to antiparallel beta-sheets by disulfide bonds (CS-alpha/beta).</text>
</comment>
<comment type="similarity">
    <text evidence="5">Belongs to the short scorpion toxin superfamily. Potassium channel inhibitor family. Alpha-KTx 11 subfamily.</text>
</comment>
<dbReference type="EMBL" id="EF065675">
    <property type="protein sequence ID" value="ABM87940.1"/>
    <property type="molecule type" value="mRNA"/>
</dbReference>
<dbReference type="SMR" id="B5KF99"/>
<dbReference type="GO" id="GO:0005576">
    <property type="term" value="C:extracellular region"/>
    <property type="evidence" value="ECO:0007669"/>
    <property type="project" value="UniProtKB-SubCell"/>
</dbReference>
<dbReference type="GO" id="GO:0015459">
    <property type="term" value="F:potassium channel regulator activity"/>
    <property type="evidence" value="ECO:0007669"/>
    <property type="project" value="UniProtKB-KW"/>
</dbReference>
<dbReference type="GO" id="GO:0090729">
    <property type="term" value="F:toxin activity"/>
    <property type="evidence" value="ECO:0007669"/>
    <property type="project" value="UniProtKB-KW"/>
</dbReference>
<protein>
    <recommendedName>
        <fullName evidence="4">Potassium channel toxin alpha-KTx J123</fullName>
    </recommendedName>
</protein>
<accession>B5KF99</accession>
<organism>
    <name type="scientific">Olivierus martensii</name>
    <name type="common">Manchurian scorpion</name>
    <name type="synonym">Mesobuthus martensii</name>
    <dbReference type="NCBI Taxonomy" id="34649"/>
    <lineage>
        <taxon>Eukaryota</taxon>
        <taxon>Metazoa</taxon>
        <taxon>Ecdysozoa</taxon>
        <taxon>Arthropoda</taxon>
        <taxon>Chelicerata</taxon>
        <taxon>Arachnida</taxon>
        <taxon>Scorpiones</taxon>
        <taxon>Buthida</taxon>
        <taxon>Buthoidea</taxon>
        <taxon>Buthidae</taxon>
        <taxon>Olivierus</taxon>
    </lineage>
</organism>
<evidence type="ECO:0000255" key="1"/>
<evidence type="ECO:0000255" key="2">
    <source>
        <dbReference type="PROSITE-ProRule" id="PRU01209"/>
    </source>
</evidence>
<evidence type="ECO:0000269" key="3">
    <source>
    </source>
</evidence>
<evidence type="ECO:0000303" key="4">
    <source>
    </source>
</evidence>
<evidence type="ECO:0000305" key="5"/>
<evidence type="ECO:0000305" key="6">
    <source>
    </source>
</evidence>
<keyword id="KW-1015">Disulfide bond</keyword>
<keyword id="KW-0872">Ion channel impairing toxin</keyword>
<keyword id="KW-0528">Neurotoxin</keyword>
<keyword id="KW-0632">Potassium channel impairing toxin</keyword>
<keyword id="KW-0964">Secreted</keyword>
<keyword id="KW-0732">Signal</keyword>
<keyword id="KW-0800">Toxin</keyword>
<keyword id="KW-1220">Voltage-gated potassium channel impairing toxin</keyword>
<reference key="1">
    <citation type="journal article" date="2008" name="Peptides">
        <title>Characterization of a new Kv1.3 channel-specific blocker, J123, from the scorpion Buthus martensii Karsch.</title>
        <authorList>
            <person name="Yin S.-J."/>
            <person name="Yi H."/>
            <person name="Ma Y."/>
            <person name="Chen Z."/>
            <person name="Song H."/>
            <person name="Wu Y.-L."/>
            <person name="Cao Z.-J."/>
            <person name="Li W.-X."/>
        </authorList>
    </citation>
    <scope>NUCLEOTIDE SEQUENCE [MRNA]</scope>
    <scope>FUNCTION</scope>
    <scope>RECOMBINANT EXPRESSION</scope>
    <scope>3D-STRUCTURE MODELING</scope>
    <source>
        <tissue>Venom gland</tissue>
    </source>
</reference>